<dbReference type="EC" id="1.1.1.267" evidence="1"/>
<dbReference type="EMBL" id="CP000672">
    <property type="protein sequence ID" value="ABR00365.1"/>
    <property type="molecule type" value="Genomic_DNA"/>
</dbReference>
<dbReference type="SMR" id="A5UHV9"/>
<dbReference type="KEGG" id="hiq:CGSHiGG_07530"/>
<dbReference type="HOGENOM" id="CLU_035714_4_0_6"/>
<dbReference type="UniPathway" id="UPA00056">
    <property type="reaction ID" value="UER00092"/>
</dbReference>
<dbReference type="Proteomes" id="UP000001990">
    <property type="component" value="Chromosome"/>
</dbReference>
<dbReference type="GO" id="GO:0030604">
    <property type="term" value="F:1-deoxy-D-xylulose-5-phosphate reductoisomerase activity"/>
    <property type="evidence" value="ECO:0007669"/>
    <property type="project" value="UniProtKB-UniRule"/>
</dbReference>
<dbReference type="GO" id="GO:0030145">
    <property type="term" value="F:manganese ion binding"/>
    <property type="evidence" value="ECO:0007669"/>
    <property type="project" value="TreeGrafter"/>
</dbReference>
<dbReference type="GO" id="GO:0070402">
    <property type="term" value="F:NADPH binding"/>
    <property type="evidence" value="ECO:0007669"/>
    <property type="project" value="InterPro"/>
</dbReference>
<dbReference type="GO" id="GO:0051484">
    <property type="term" value="P:isopentenyl diphosphate biosynthetic process, methylerythritol 4-phosphate pathway involved in terpenoid biosynthetic process"/>
    <property type="evidence" value="ECO:0007669"/>
    <property type="project" value="TreeGrafter"/>
</dbReference>
<dbReference type="FunFam" id="1.10.1740.10:FF:000004">
    <property type="entry name" value="1-deoxy-D-xylulose 5-phosphate reductoisomerase"/>
    <property type="match status" value="1"/>
</dbReference>
<dbReference type="FunFam" id="3.40.50.720:FF:000045">
    <property type="entry name" value="1-deoxy-D-xylulose 5-phosphate reductoisomerase"/>
    <property type="match status" value="1"/>
</dbReference>
<dbReference type="Gene3D" id="1.10.1740.10">
    <property type="match status" value="1"/>
</dbReference>
<dbReference type="Gene3D" id="3.40.50.720">
    <property type="entry name" value="NAD(P)-binding Rossmann-like Domain"/>
    <property type="match status" value="1"/>
</dbReference>
<dbReference type="HAMAP" id="MF_00183">
    <property type="entry name" value="DXP_reductoisom"/>
    <property type="match status" value="1"/>
</dbReference>
<dbReference type="InterPro" id="IPR003821">
    <property type="entry name" value="DXP_reductoisomerase"/>
</dbReference>
<dbReference type="InterPro" id="IPR013644">
    <property type="entry name" value="DXP_reductoisomerase_C"/>
</dbReference>
<dbReference type="InterPro" id="IPR013512">
    <property type="entry name" value="DXP_reductoisomerase_N"/>
</dbReference>
<dbReference type="InterPro" id="IPR026877">
    <property type="entry name" value="DXPR_C"/>
</dbReference>
<dbReference type="InterPro" id="IPR036169">
    <property type="entry name" value="DXPR_C_sf"/>
</dbReference>
<dbReference type="InterPro" id="IPR036291">
    <property type="entry name" value="NAD(P)-bd_dom_sf"/>
</dbReference>
<dbReference type="NCBIfam" id="TIGR00243">
    <property type="entry name" value="Dxr"/>
    <property type="match status" value="1"/>
</dbReference>
<dbReference type="NCBIfam" id="NF003938">
    <property type="entry name" value="PRK05447.1-1"/>
    <property type="match status" value="1"/>
</dbReference>
<dbReference type="NCBIfam" id="NF009114">
    <property type="entry name" value="PRK12464.1"/>
    <property type="match status" value="1"/>
</dbReference>
<dbReference type="PANTHER" id="PTHR30525">
    <property type="entry name" value="1-DEOXY-D-XYLULOSE 5-PHOSPHATE REDUCTOISOMERASE"/>
    <property type="match status" value="1"/>
</dbReference>
<dbReference type="PANTHER" id="PTHR30525:SF0">
    <property type="entry name" value="1-DEOXY-D-XYLULOSE 5-PHOSPHATE REDUCTOISOMERASE, CHLOROPLASTIC"/>
    <property type="match status" value="1"/>
</dbReference>
<dbReference type="Pfam" id="PF08436">
    <property type="entry name" value="DXP_redisom_C"/>
    <property type="match status" value="1"/>
</dbReference>
<dbReference type="Pfam" id="PF02670">
    <property type="entry name" value="DXP_reductoisom"/>
    <property type="match status" value="1"/>
</dbReference>
<dbReference type="Pfam" id="PF13288">
    <property type="entry name" value="DXPR_C"/>
    <property type="match status" value="1"/>
</dbReference>
<dbReference type="PIRSF" id="PIRSF006205">
    <property type="entry name" value="Dxp_reductismrs"/>
    <property type="match status" value="1"/>
</dbReference>
<dbReference type="SUPFAM" id="SSF69055">
    <property type="entry name" value="1-deoxy-D-xylulose-5-phosphate reductoisomerase, C-terminal domain"/>
    <property type="match status" value="1"/>
</dbReference>
<dbReference type="SUPFAM" id="SSF55347">
    <property type="entry name" value="Glyceraldehyde-3-phosphate dehydrogenase-like, C-terminal domain"/>
    <property type="match status" value="1"/>
</dbReference>
<dbReference type="SUPFAM" id="SSF51735">
    <property type="entry name" value="NAD(P)-binding Rossmann-fold domains"/>
    <property type="match status" value="1"/>
</dbReference>
<keyword id="KW-0414">Isoprene biosynthesis</keyword>
<keyword id="KW-0464">Manganese</keyword>
<keyword id="KW-0479">Metal-binding</keyword>
<keyword id="KW-0521">NADP</keyword>
<keyword id="KW-0560">Oxidoreductase</keyword>
<protein>
    <recommendedName>
        <fullName evidence="1">1-deoxy-D-xylulose 5-phosphate reductoisomerase</fullName>
        <shortName evidence="1">DXP reductoisomerase</shortName>
        <ecNumber evidence="1">1.1.1.267</ecNumber>
    </recommendedName>
    <alternativeName>
        <fullName evidence="1">1-deoxyxylulose-5-phosphate reductoisomerase</fullName>
    </alternativeName>
    <alternativeName>
        <fullName evidence="1">2-C-methyl-D-erythritol 4-phosphate synthase</fullName>
    </alternativeName>
</protein>
<accession>A5UHV9</accession>
<gene>
    <name evidence="1" type="primary">dxr</name>
    <name type="ordered locus">CGSHiGG_07530</name>
</gene>
<evidence type="ECO:0000255" key="1">
    <source>
        <dbReference type="HAMAP-Rule" id="MF_00183"/>
    </source>
</evidence>
<sequence length="397" mass="43594">MQKQNIVILGSTGSIGKSTLSVIENNPQKYHAFALVGGKNVETMFEQCIKFRPHFAALDDVNAAKILREKLIAHHIPTEVLAGQRAICELAAHPDADQIMASIVGAAGLLPTLSAVKAGKRVLLANKESLVTCGQLFIDAVKNYGAKLLPVDSEHNAIFQSLPPEAQEKIGFCPLSELGVSKIILTGSGGPFRYTPLEQFASITPEQAVAHPNWSMGKKISVDSATMMNKGLEYIEARWLFNASAEEMEVIIHPQSIIHSMVRYVDGSVIAQMGNPDMRTPIAETMAYPHRTFAGVEPLDFFKIKELTFIEPDFNRYPNLKLAIDAFAAGQYATTAMNAANEIAVQAFLDRQISFMDIAKINLKTIEKISPYTIQNIDDVLEIDAQAREIAKTLIRE</sequence>
<name>DXR_HAEIG</name>
<proteinExistence type="inferred from homology"/>
<organism>
    <name type="scientific">Haemophilus influenzae (strain PittGG)</name>
    <dbReference type="NCBI Taxonomy" id="374931"/>
    <lineage>
        <taxon>Bacteria</taxon>
        <taxon>Pseudomonadati</taxon>
        <taxon>Pseudomonadota</taxon>
        <taxon>Gammaproteobacteria</taxon>
        <taxon>Pasteurellales</taxon>
        <taxon>Pasteurellaceae</taxon>
        <taxon>Haemophilus</taxon>
    </lineage>
</organism>
<reference key="1">
    <citation type="journal article" date="2007" name="Genome Biol.">
        <title>Characterization and modeling of the Haemophilus influenzae core and supragenomes based on the complete genomic sequences of Rd and 12 clinical nontypeable strains.</title>
        <authorList>
            <person name="Hogg J.S."/>
            <person name="Hu F.Z."/>
            <person name="Janto B."/>
            <person name="Boissy R."/>
            <person name="Hayes J."/>
            <person name="Keefe R."/>
            <person name="Post J.C."/>
            <person name="Ehrlich G.D."/>
        </authorList>
    </citation>
    <scope>NUCLEOTIDE SEQUENCE [LARGE SCALE GENOMIC DNA]</scope>
    <source>
        <strain>PittGG</strain>
    </source>
</reference>
<feature type="chain" id="PRO_1000020268" description="1-deoxy-D-xylulose 5-phosphate reductoisomerase">
    <location>
        <begin position="1"/>
        <end position="397"/>
    </location>
</feature>
<feature type="binding site" evidence="1">
    <location>
        <position position="12"/>
    </location>
    <ligand>
        <name>NADPH</name>
        <dbReference type="ChEBI" id="CHEBI:57783"/>
    </ligand>
</feature>
<feature type="binding site" evidence="1">
    <location>
        <position position="13"/>
    </location>
    <ligand>
        <name>NADPH</name>
        <dbReference type="ChEBI" id="CHEBI:57783"/>
    </ligand>
</feature>
<feature type="binding site" evidence="1">
    <location>
        <position position="14"/>
    </location>
    <ligand>
        <name>NADPH</name>
        <dbReference type="ChEBI" id="CHEBI:57783"/>
    </ligand>
</feature>
<feature type="binding site" evidence="1">
    <location>
        <position position="15"/>
    </location>
    <ligand>
        <name>NADPH</name>
        <dbReference type="ChEBI" id="CHEBI:57783"/>
    </ligand>
</feature>
<feature type="binding site" evidence="1">
    <location>
        <position position="38"/>
    </location>
    <ligand>
        <name>NADPH</name>
        <dbReference type="ChEBI" id="CHEBI:57783"/>
    </ligand>
</feature>
<feature type="binding site" evidence="1">
    <location>
        <position position="39"/>
    </location>
    <ligand>
        <name>NADPH</name>
        <dbReference type="ChEBI" id="CHEBI:57783"/>
    </ligand>
</feature>
<feature type="binding site" evidence="1">
    <location>
        <position position="40"/>
    </location>
    <ligand>
        <name>NADPH</name>
        <dbReference type="ChEBI" id="CHEBI:57783"/>
    </ligand>
</feature>
<feature type="binding site" evidence="1">
    <location>
        <position position="126"/>
    </location>
    <ligand>
        <name>NADPH</name>
        <dbReference type="ChEBI" id="CHEBI:57783"/>
    </ligand>
</feature>
<feature type="binding site" evidence="1">
    <location>
        <position position="127"/>
    </location>
    <ligand>
        <name>1-deoxy-D-xylulose 5-phosphate</name>
        <dbReference type="ChEBI" id="CHEBI:57792"/>
    </ligand>
</feature>
<feature type="binding site" evidence="1">
    <location>
        <position position="128"/>
    </location>
    <ligand>
        <name>NADPH</name>
        <dbReference type="ChEBI" id="CHEBI:57783"/>
    </ligand>
</feature>
<feature type="binding site" evidence="1">
    <location>
        <position position="152"/>
    </location>
    <ligand>
        <name>Mn(2+)</name>
        <dbReference type="ChEBI" id="CHEBI:29035"/>
    </ligand>
</feature>
<feature type="binding site" evidence="1">
    <location>
        <position position="153"/>
    </location>
    <ligand>
        <name>1-deoxy-D-xylulose 5-phosphate</name>
        <dbReference type="ChEBI" id="CHEBI:57792"/>
    </ligand>
</feature>
<feature type="binding site" evidence="1">
    <location>
        <position position="154"/>
    </location>
    <ligand>
        <name>1-deoxy-D-xylulose 5-phosphate</name>
        <dbReference type="ChEBI" id="CHEBI:57792"/>
    </ligand>
</feature>
<feature type="binding site" evidence="1">
    <location>
        <position position="154"/>
    </location>
    <ligand>
        <name>Mn(2+)</name>
        <dbReference type="ChEBI" id="CHEBI:29035"/>
    </ligand>
</feature>
<feature type="binding site" evidence="1">
    <location>
        <position position="188"/>
    </location>
    <ligand>
        <name>1-deoxy-D-xylulose 5-phosphate</name>
        <dbReference type="ChEBI" id="CHEBI:57792"/>
    </ligand>
</feature>
<feature type="binding site" evidence="1">
    <location>
        <position position="211"/>
    </location>
    <ligand>
        <name>1-deoxy-D-xylulose 5-phosphate</name>
        <dbReference type="ChEBI" id="CHEBI:57792"/>
    </ligand>
</feature>
<feature type="binding site" evidence="1">
    <location>
        <position position="217"/>
    </location>
    <ligand>
        <name>NADPH</name>
        <dbReference type="ChEBI" id="CHEBI:57783"/>
    </ligand>
</feature>
<feature type="binding site" evidence="1">
    <location>
        <position position="224"/>
    </location>
    <ligand>
        <name>1-deoxy-D-xylulose 5-phosphate</name>
        <dbReference type="ChEBI" id="CHEBI:57792"/>
    </ligand>
</feature>
<feature type="binding site" evidence="1">
    <location>
        <position position="229"/>
    </location>
    <ligand>
        <name>1-deoxy-D-xylulose 5-phosphate</name>
        <dbReference type="ChEBI" id="CHEBI:57792"/>
    </ligand>
</feature>
<feature type="binding site" evidence="1">
    <location>
        <position position="230"/>
    </location>
    <ligand>
        <name>1-deoxy-D-xylulose 5-phosphate</name>
        <dbReference type="ChEBI" id="CHEBI:57792"/>
    </ligand>
</feature>
<feature type="binding site" evidence="1">
    <location>
        <position position="233"/>
    </location>
    <ligand>
        <name>1-deoxy-D-xylulose 5-phosphate</name>
        <dbReference type="ChEBI" id="CHEBI:57792"/>
    </ligand>
</feature>
<feature type="binding site" evidence="1">
    <location>
        <position position="233"/>
    </location>
    <ligand>
        <name>Mn(2+)</name>
        <dbReference type="ChEBI" id="CHEBI:29035"/>
    </ligand>
</feature>
<comment type="function">
    <text evidence="1">Catalyzes the NADPH-dependent rearrangement and reduction of 1-deoxy-D-xylulose-5-phosphate (DXP) to 2-C-methyl-D-erythritol 4-phosphate (MEP).</text>
</comment>
<comment type="catalytic activity">
    <reaction evidence="1">
        <text>2-C-methyl-D-erythritol 4-phosphate + NADP(+) = 1-deoxy-D-xylulose 5-phosphate + NADPH + H(+)</text>
        <dbReference type="Rhea" id="RHEA:13717"/>
        <dbReference type="ChEBI" id="CHEBI:15378"/>
        <dbReference type="ChEBI" id="CHEBI:57783"/>
        <dbReference type="ChEBI" id="CHEBI:57792"/>
        <dbReference type="ChEBI" id="CHEBI:58262"/>
        <dbReference type="ChEBI" id="CHEBI:58349"/>
        <dbReference type="EC" id="1.1.1.267"/>
    </reaction>
    <physiologicalReaction direction="right-to-left" evidence="1">
        <dbReference type="Rhea" id="RHEA:13719"/>
    </physiologicalReaction>
</comment>
<comment type="cofactor">
    <cofactor evidence="1">
        <name>Mg(2+)</name>
        <dbReference type="ChEBI" id="CHEBI:18420"/>
    </cofactor>
    <cofactor evidence="1">
        <name>Mn(2+)</name>
        <dbReference type="ChEBI" id="CHEBI:29035"/>
    </cofactor>
</comment>
<comment type="pathway">
    <text evidence="1">Isoprenoid biosynthesis; isopentenyl diphosphate biosynthesis via DXP pathway; isopentenyl diphosphate from 1-deoxy-D-xylulose 5-phosphate: step 1/6.</text>
</comment>
<comment type="similarity">
    <text evidence="1">Belongs to the DXR family.</text>
</comment>